<feature type="chain" id="PRO_0000278056" description="tRNA pseudouridine synthase A">
    <location>
        <begin position="1"/>
        <end position="245"/>
    </location>
</feature>
<feature type="active site" description="Nucleophile" evidence="1">
    <location>
        <position position="52"/>
    </location>
</feature>
<feature type="binding site" evidence="1">
    <location>
        <position position="111"/>
    </location>
    <ligand>
        <name>substrate</name>
    </ligand>
</feature>
<organism>
    <name type="scientific">Rickettsia felis (strain ATCC VR-1525 / URRWXCal2)</name>
    <name type="common">Rickettsia azadi</name>
    <dbReference type="NCBI Taxonomy" id="315456"/>
    <lineage>
        <taxon>Bacteria</taxon>
        <taxon>Pseudomonadati</taxon>
        <taxon>Pseudomonadota</taxon>
        <taxon>Alphaproteobacteria</taxon>
        <taxon>Rickettsiales</taxon>
        <taxon>Rickettsiaceae</taxon>
        <taxon>Rickettsieae</taxon>
        <taxon>Rickettsia</taxon>
        <taxon>spotted fever group</taxon>
    </lineage>
</organism>
<sequence>MYRYKITIEYLGTNLAGWQRQAGVISVQQILEEAIYKFSGEQVILFGSGRTDAGVHAIGQVAHFDLSKHLEPHKIITAINYFARPYAVGVWNCELASNNFHARFSATSRHYIYRIINRPYPSVIDLNRAWWISSPLDVLTMQKAAAYLLGKHDFTSFRASSCQSKSPIKTLTELNIIKEDEEIKLYLSAPSFLHHMVRNIVGSLVLVGKNVWQAEQIKDVLEAKDRKAAGPTAPASGLYFVKTEY</sequence>
<comment type="function">
    <text evidence="1">Formation of pseudouridine at positions 38, 39 and 40 in the anticodon stem and loop of transfer RNAs.</text>
</comment>
<comment type="catalytic activity">
    <reaction evidence="1">
        <text>uridine(38/39/40) in tRNA = pseudouridine(38/39/40) in tRNA</text>
        <dbReference type="Rhea" id="RHEA:22376"/>
        <dbReference type="Rhea" id="RHEA-COMP:10085"/>
        <dbReference type="Rhea" id="RHEA-COMP:10087"/>
        <dbReference type="ChEBI" id="CHEBI:65314"/>
        <dbReference type="ChEBI" id="CHEBI:65315"/>
        <dbReference type="EC" id="5.4.99.12"/>
    </reaction>
</comment>
<comment type="subunit">
    <text evidence="1">Homodimer.</text>
</comment>
<comment type="similarity">
    <text evidence="1">Belongs to the tRNA pseudouridine synthase TruA family.</text>
</comment>
<proteinExistence type="inferred from homology"/>
<name>TRUA_RICFE</name>
<reference key="1">
    <citation type="journal article" date="2005" name="PLoS Biol.">
        <title>The genome sequence of Rickettsia felis identifies the first putative conjugative plasmid in an obligate intracellular parasite.</title>
        <authorList>
            <person name="Ogata H."/>
            <person name="Renesto P."/>
            <person name="Audic S."/>
            <person name="Robert C."/>
            <person name="Blanc G."/>
            <person name="Fournier P.-E."/>
            <person name="Parinello H."/>
            <person name="Claverie J.-M."/>
            <person name="Raoult D."/>
        </authorList>
    </citation>
    <scope>NUCLEOTIDE SEQUENCE [LARGE SCALE GENOMIC DNA]</scope>
    <source>
        <strain>ATCC VR-1525 / URRWXCal2</strain>
    </source>
</reference>
<keyword id="KW-0413">Isomerase</keyword>
<keyword id="KW-0819">tRNA processing</keyword>
<protein>
    <recommendedName>
        <fullName evidence="1">tRNA pseudouridine synthase A</fullName>
        <ecNumber evidence="1">5.4.99.12</ecNumber>
    </recommendedName>
    <alternativeName>
        <fullName evidence="1">tRNA pseudouridine(38-40) synthase</fullName>
    </alternativeName>
    <alternativeName>
        <fullName evidence="1">tRNA pseudouridylate synthase I</fullName>
    </alternativeName>
    <alternativeName>
        <fullName evidence="1">tRNA-uridine isomerase I</fullName>
    </alternativeName>
</protein>
<evidence type="ECO:0000255" key="1">
    <source>
        <dbReference type="HAMAP-Rule" id="MF_00171"/>
    </source>
</evidence>
<gene>
    <name evidence="1" type="primary">truA</name>
    <name type="ordered locus">RF_1356</name>
</gene>
<accession>Q4UJT2</accession>
<dbReference type="EC" id="5.4.99.12" evidence="1"/>
<dbReference type="EMBL" id="CP000053">
    <property type="protein sequence ID" value="AAY62207.1"/>
    <property type="molecule type" value="Genomic_DNA"/>
</dbReference>
<dbReference type="SMR" id="Q4UJT2"/>
<dbReference type="STRING" id="315456.RF_1356"/>
<dbReference type="KEGG" id="rfe:RF_1356"/>
<dbReference type="eggNOG" id="COG0101">
    <property type="taxonomic scope" value="Bacteria"/>
</dbReference>
<dbReference type="HOGENOM" id="CLU_014673_0_1_5"/>
<dbReference type="OrthoDB" id="9811823at2"/>
<dbReference type="Proteomes" id="UP000008548">
    <property type="component" value="Chromosome"/>
</dbReference>
<dbReference type="GO" id="GO:0003723">
    <property type="term" value="F:RNA binding"/>
    <property type="evidence" value="ECO:0007669"/>
    <property type="project" value="InterPro"/>
</dbReference>
<dbReference type="GO" id="GO:0160147">
    <property type="term" value="F:tRNA pseudouridine(38-40) synthase activity"/>
    <property type="evidence" value="ECO:0007669"/>
    <property type="project" value="UniProtKB-EC"/>
</dbReference>
<dbReference type="GO" id="GO:0031119">
    <property type="term" value="P:tRNA pseudouridine synthesis"/>
    <property type="evidence" value="ECO:0007669"/>
    <property type="project" value="UniProtKB-UniRule"/>
</dbReference>
<dbReference type="CDD" id="cd02570">
    <property type="entry name" value="PseudoU_synth_EcTruA"/>
    <property type="match status" value="1"/>
</dbReference>
<dbReference type="FunFam" id="3.30.70.580:FF:000001">
    <property type="entry name" value="tRNA pseudouridine synthase A"/>
    <property type="match status" value="1"/>
</dbReference>
<dbReference type="Gene3D" id="3.30.70.660">
    <property type="entry name" value="Pseudouridine synthase I, catalytic domain, C-terminal subdomain"/>
    <property type="match status" value="1"/>
</dbReference>
<dbReference type="Gene3D" id="3.30.70.580">
    <property type="entry name" value="Pseudouridine synthase I, catalytic domain, N-terminal subdomain"/>
    <property type="match status" value="1"/>
</dbReference>
<dbReference type="HAMAP" id="MF_00171">
    <property type="entry name" value="TruA"/>
    <property type="match status" value="1"/>
</dbReference>
<dbReference type="InterPro" id="IPR020103">
    <property type="entry name" value="PsdUridine_synth_cat_dom_sf"/>
</dbReference>
<dbReference type="InterPro" id="IPR001406">
    <property type="entry name" value="PsdUridine_synth_TruA"/>
</dbReference>
<dbReference type="InterPro" id="IPR020097">
    <property type="entry name" value="PsdUridine_synth_TruA_a/b_dom"/>
</dbReference>
<dbReference type="InterPro" id="IPR020095">
    <property type="entry name" value="PsdUridine_synth_TruA_C"/>
</dbReference>
<dbReference type="InterPro" id="IPR020094">
    <property type="entry name" value="TruA/RsuA/RluB/E/F_N"/>
</dbReference>
<dbReference type="NCBIfam" id="TIGR00071">
    <property type="entry name" value="hisT_truA"/>
    <property type="match status" value="1"/>
</dbReference>
<dbReference type="PANTHER" id="PTHR11142">
    <property type="entry name" value="PSEUDOURIDYLATE SYNTHASE"/>
    <property type="match status" value="1"/>
</dbReference>
<dbReference type="PANTHER" id="PTHR11142:SF0">
    <property type="entry name" value="TRNA PSEUDOURIDINE SYNTHASE-LIKE 1"/>
    <property type="match status" value="1"/>
</dbReference>
<dbReference type="Pfam" id="PF01416">
    <property type="entry name" value="PseudoU_synth_1"/>
    <property type="match status" value="2"/>
</dbReference>
<dbReference type="PIRSF" id="PIRSF001430">
    <property type="entry name" value="tRNA_psdUrid_synth"/>
    <property type="match status" value="1"/>
</dbReference>
<dbReference type="SUPFAM" id="SSF55120">
    <property type="entry name" value="Pseudouridine synthase"/>
    <property type="match status" value="1"/>
</dbReference>